<feature type="chain" id="PRO_0000110446" description="Beta-ketoacyl-[acyl-carrier-protein] synthase III">
    <location>
        <begin position="1"/>
        <end position="320"/>
    </location>
</feature>
<feature type="region of interest" description="ACP-binding" evidence="1">
    <location>
        <begin position="248"/>
        <end position="252"/>
    </location>
</feature>
<feature type="active site" evidence="1">
    <location>
        <position position="114"/>
    </location>
</feature>
<feature type="active site" evidence="1">
    <location>
        <position position="247"/>
    </location>
</feature>
<feature type="active site" evidence="1">
    <location>
        <position position="277"/>
    </location>
</feature>
<organism>
    <name type="scientific">Neisseria meningitidis serogroup B (strain ATCC BAA-335 / MC58)</name>
    <dbReference type="NCBI Taxonomy" id="122586"/>
    <lineage>
        <taxon>Bacteria</taxon>
        <taxon>Pseudomonadati</taxon>
        <taxon>Pseudomonadota</taxon>
        <taxon>Betaproteobacteria</taxon>
        <taxon>Neisseriales</taxon>
        <taxon>Neisseriaceae</taxon>
        <taxon>Neisseria</taxon>
    </lineage>
</organism>
<keyword id="KW-0012">Acyltransferase</keyword>
<keyword id="KW-0963">Cytoplasm</keyword>
<keyword id="KW-0275">Fatty acid biosynthesis</keyword>
<keyword id="KW-0276">Fatty acid metabolism</keyword>
<keyword id="KW-0444">Lipid biosynthesis</keyword>
<keyword id="KW-0443">Lipid metabolism</keyword>
<keyword id="KW-0511">Multifunctional enzyme</keyword>
<keyword id="KW-1185">Reference proteome</keyword>
<keyword id="KW-0808">Transferase</keyword>
<gene>
    <name evidence="1" type="primary">fabH</name>
    <name type="ordered locus">NMB1916</name>
</gene>
<accession>Q9JXR6</accession>
<comment type="function">
    <text evidence="1">Catalyzes the condensation reaction of fatty acid synthesis by the addition to an acyl acceptor of two carbons from malonyl-ACP. Catalyzes the first condensation reaction which initiates fatty acid synthesis and may therefore play a role in governing the total rate of fatty acid production. Possesses both acetoacetyl-ACP synthase and acetyl transacylase activities. Its substrate specificity determines the biosynthesis of branched-chain and/or straight-chain of fatty acids.</text>
</comment>
<comment type="catalytic activity">
    <reaction evidence="1">
        <text>malonyl-[ACP] + acetyl-CoA + H(+) = 3-oxobutanoyl-[ACP] + CO2 + CoA</text>
        <dbReference type="Rhea" id="RHEA:12080"/>
        <dbReference type="Rhea" id="RHEA-COMP:9623"/>
        <dbReference type="Rhea" id="RHEA-COMP:9625"/>
        <dbReference type="ChEBI" id="CHEBI:15378"/>
        <dbReference type="ChEBI" id="CHEBI:16526"/>
        <dbReference type="ChEBI" id="CHEBI:57287"/>
        <dbReference type="ChEBI" id="CHEBI:57288"/>
        <dbReference type="ChEBI" id="CHEBI:78449"/>
        <dbReference type="ChEBI" id="CHEBI:78450"/>
        <dbReference type="EC" id="2.3.1.180"/>
    </reaction>
</comment>
<comment type="pathway">
    <text evidence="1">Lipid metabolism; fatty acid biosynthesis.</text>
</comment>
<comment type="subunit">
    <text evidence="1">Homodimer.</text>
</comment>
<comment type="subcellular location">
    <subcellularLocation>
        <location evidence="1">Cytoplasm</location>
    </subcellularLocation>
</comment>
<comment type="domain">
    <text evidence="1">The last Arg residue of the ACP-binding site is essential for the weak association between ACP/AcpP and FabH.</text>
</comment>
<comment type="similarity">
    <text evidence="1">Belongs to the thiolase-like superfamily. FabH family.</text>
</comment>
<proteinExistence type="inferred from homology"/>
<name>FABH_NEIMB</name>
<reference key="1">
    <citation type="journal article" date="2000" name="Science">
        <title>Complete genome sequence of Neisseria meningitidis serogroup B strain MC58.</title>
        <authorList>
            <person name="Tettelin H."/>
            <person name="Saunders N.J."/>
            <person name="Heidelberg J.F."/>
            <person name="Jeffries A.C."/>
            <person name="Nelson K.E."/>
            <person name="Eisen J.A."/>
            <person name="Ketchum K.A."/>
            <person name="Hood D.W."/>
            <person name="Peden J.F."/>
            <person name="Dodson R.J."/>
            <person name="Nelson W.C."/>
            <person name="Gwinn M.L."/>
            <person name="DeBoy R.T."/>
            <person name="Peterson J.D."/>
            <person name="Hickey E.K."/>
            <person name="Haft D.H."/>
            <person name="Salzberg S.L."/>
            <person name="White O."/>
            <person name="Fleischmann R.D."/>
            <person name="Dougherty B.A."/>
            <person name="Mason T.M."/>
            <person name="Ciecko A."/>
            <person name="Parksey D.S."/>
            <person name="Blair E."/>
            <person name="Cittone H."/>
            <person name="Clark E.B."/>
            <person name="Cotton M.D."/>
            <person name="Utterback T.R."/>
            <person name="Khouri H.M."/>
            <person name="Qin H."/>
            <person name="Vamathevan J.J."/>
            <person name="Gill J."/>
            <person name="Scarlato V."/>
            <person name="Masignani V."/>
            <person name="Pizza M."/>
            <person name="Grandi G."/>
            <person name="Sun L."/>
            <person name="Smith H.O."/>
            <person name="Fraser C.M."/>
            <person name="Moxon E.R."/>
            <person name="Rappuoli R."/>
            <person name="Venter J.C."/>
        </authorList>
    </citation>
    <scope>NUCLEOTIDE SEQUENCE [LARGE SCALE GENOMIC DNA]</scope>
    <source>
        <strain>ATCC BAA-335 / MC58</strain>
    </source>
</reference>
<evidence type="ECO:0000255" key="1">
    <source>
        <dbReference type="HAMAP-Rule" id="MF_01815"/>
    </source>
</evidence>
<protein>
    <recommendedName>
        <fullName evidence="1">Beta-ketoacyl-[acyl-carrier-protein] synthase III</fullName>
        <shortName evidence="1">Beta-ketoacyl-ACP synthase III</shortName>
        <shortName evidence="1">KAS III</shortName>
        <ecNumber evidence="1">2.3.1.180</ecNumber>
    </recommendedName>
    <alternativeName>
        <fullName evidence="1">3-oxoacyl-[acyl-carrier-protein] synthase 3</fullName>
    </alternativeName>
    <alternativeName>
        <fullName evidence="1">3-oxoacyl-[acyl-carrier-protein] synthase III</fullName>
    </alternativeName>
</protein>
<sequence>MQYAKISGTGSYLPANRVSNDDLAQKVDTSDEWITARTGIKFRHIAAENEKTSDLAAEAAHRALDAAGLDSGEIDLIIVATATPDMQFPSTATIVQQKLGITNGCPAFDVQAVCAGFMYALTTANAYIKSGMAKNALVIGAETFSRIVDWNDRTTCVLFGDGAGAVVLSASDTPGIIHSKLKADGNYLKLLNVPGQIACGKVSGSPYISMDGPGVFKFAVKMLSKIADDVIEEAGYTAAQIDWIVPHQANRRIIESTAKHLGLSMDKVVLTVQDHGNTSAASIPLALDTGIRSGQIKRGQNLLLEGIGGGFAWGAVLLQY</sequence>
<dbReference type="EC" id="2.3.1.180" evidence="1"/>
<dbReference type="EMBL" id="AE002098">
    <property type="protein sequence ID" value="AAF42246.1"/>
    <property type="molecule type" value="Genomic_DNA"/>
</dbReference>
<dbReference type="PIR" id="C81029">
    <property type="entry name" value="C81029"/>
</dbReference>
<dbReference type="RefSeq" id="NP_274910.1">
    <property type="nucleotide sequence ID" value="NC_003112.2"/>
</dbReference>
<dbReference type="RefSeq" id="WP_002225817.1">
    <property type="nucleotide sequence ID" value="NC_003112.2"/>
</dbReference>
<dbReference type="SMR" id="Q9JXR6"/>
<dbReference type="FunCoup" id="Q9JXR6">
    <property type="interactions" value="484"/>
</dbReference>
<dbReference type="STRING" id="122586.NMB1916"/>
<dbReference type="PaxDb" id="122586-NMB1916"/>
<dbReference type="KEGG" id="nme:NMB1916"/>
<dbReference type="PATRIC" id="fig|122586.8.peg.2444"/>
<dbReference type="HOGENOM" id="CLU_039592_4_1_4"/>
<dbReference type="InParanoid" id="Q9JXR6"/>
<dbReference type="OrthoDB" id="9815506at2"/>
<dbReference type="UniPathway" id="UPA00094"/>
<dbReference type="Proteomes" id="UP000000425">
    <property type="component" value="Chromosome"/>
</dbReference>
<dbReference type="GO" id="GO:0005737">
    <property type="term" value="C:cytoplasm"/>
    <property type="evidence" value="ECO:0007669"/>
    <property type="project" value="UniProtKB-SubCell"/>
</dbReference>
<dbReference type="GO" id="GO:0004315">
    <property type="term" value="F:3-oxoacyl-[acyl-carrier-protein] synthase activity"/>
    <property type="evidence" value="ECO:0007669"/>
    <property type="project" value="InterPro"/>
</dbReference>
<dbReference type="GO" id="GO:0033818">
    <property type="term" value="F:beta-ketoacyl-acyl-carrier-protein synthase III activity"/>
    <property type="evidence" value="ECO:0007669"/>
    <property type="project" value="UniProtKB-UniRule"/>
</dbReference>
<dbReference type="GO" id="GO:0006633">
    <property type="term" value="P:fatty acid biosynthetic process"/>
    <property type="evidence" value="ECO:0007669"/>
    <property type="project" value="UniProtKB-UniRule"/>
</dbReference>
<dbReference type="CDD" id="cd00830">
    <property type="entry name" value="KAS_III"/>
    <property type="match status" value="1"/>
</dbReference>
<dbReference type="FunFam" id="3.40.47.10:FF:000004">
    <property type="entry name" value="3-oxoacyl-[acyl-carrier-protein] synthase 3"/>
    <property type="match status" value="1"/>
</dbReference>
<dbReference type="Gene3D" id="3.40.47.10">
    <property type="match status" value="1"/>
</dbReference>
<dbReference type="HAMAP" id="MF_01815">
    <property type="entry name" value="FabH"/>
    <property type="match status" value="1"/>
</dbReference>
<dbReference type="InterPro" id="IPR013747">
    <property type="entry name" value="ACP_syn_III_C"/>
</dbReference>
<dbReference type="InterPro" id="IPR013751">
    <property type="entry name" value="ACP_syn_III_N"/>
</dbReference>
<dbReference type="InterPro" id="IPR004655">
    <property type="entry name" value="FabH"/>
</dbReference>
<dbReference type="InterPro" id="IPR016039">
    <property type="entry name" value="Thiolase-like"/>
</dbReference>
<dbReference type="NCBIfam" id="TIGR00747">
    <property type="entry name" value="fabH"/>
    <property type="match status" value="1"/>
</dbReference>
<dbReference type="NCBIfam" id="NF006829">
    <property type="entry name" value="PRK09352.1"/>
    <property type="match status" value="1"/>
</dbReference>
<dbReference type="PANTHER" id="PTHR43091">
    <property type="entry name" value="3-OXOACYL-[ACYL-CARRIER-PROTEIN] SYNTHASE"/>
    <property type="match status" value="1"/>
</dbReference>
<dbReference type="PANTHER" id="PTHR43091:SF1">
    <property type="entry name" value="BETA-KETOACYL-[ACYL-CARRIER-PROTEIN] SYNTHASE III, CHLOROPLASTIC"/>
    <property type="match status" value="1"/>
</dbReference>
<dbReference type="Pfam" id="PF08545">
    <property type="entry name" value="ACP_syn_III"/>
    <property type="match status" value="1"/>
</dbReference>
<dbReference type="Pfam" id="PF08541">
    <property type="entry name" value="ACP_syn_III_C"/>
    <property type="match status" value="1"/>
</dbReference>
<dbReference type="SUPFAM" id="SSF53901">
    <property type="entry name" value="Thiolase-like"/>
    <property type="match status" value="1"/>
</dbReference>